<name>PUR5_LYSSC</name>
<evidence type="ECO:0000255" key="1">
    <source>
        <dbReference type="HAMAP-Rule" id="MF_00741"/>
    </source>
</evidence>
<dbReference type="EC" id="6.3.3.1" evidence="1"/>
<dbReference type="EMBL" id="CP000817">
    <property type="protein sequence ID" value="ACA37847.1"/>
    <property type="molecule type" value="Genomic_DNA"/>
</dbReference>
<dbReference type="RefSeq" id="WP_012292016.1">
    <property type="nucleotide sequence ID" value="NC_010382.1"/>
</dbReference>
<dbReference type="SMR" id="B1HTV6"/>
<dbReference type="EnsemblBacteria" id="ACA37847">
    <property type="protein sequence ID" value="ACA37847"/>
    <property type="gene ID" value="Bsph_0216"/>
</dbReference>
<dbReference type="KEGG" id="lsp:Bsph_0216"/>
<dbReference type="HOGENOM" id="CLU_047116_0_0_9"/>
<dbReference type="UniPathway" id="UPA00074">
    <property type="reaction ID" value="UER00129"/>
</dbReference>
<dbReference type="Proteomes" id="UP000002164">
    <property type="component" value="Chromosome"/>
</dbReference>
<dbReference type="GO" id="GO:0005829">
    <property type="term" value="C:cytosol"/>
    <property type="evidence" value="ECO:0007669"/>
    <property type="project" value="TreeGrafter"/>
</dbReference>
<dbReference type="GO" id="GO:0005524">
    <property type="term" value="F:ATP binding"/>
    <property type="evidence" value="ECO:0007669"/>
    <property type="project" value="UniProtKB-KW"/>
</dbReference>
<dbReference type="GO" id="GO:0004637">
    <property type="term" value="F:phosphoribosylamine-glycine ligase activity"/>
    <property type="evidence" value="ECO:0007669"/>
    <property type="project" value="TreeGrafter"/>
</dbReference>
<dbReference type="GO" id="GO:0004641">
    <property type="term" value="F:phosphoribosylformylglycinamidine cyclo-ligase activity"/>
    <property type="evidence" value="ECO:0007669"/>
    <property type="project" value="UniProtKB-UniRule"/>
</dbReference>
<dbReference type="GO" id="GO:0006189">
    <property type="term" value="P:'de novo' IMP biosynthetic process"/>
    <property type="evidence" value="ECO:0007669"/>
    <property type="project" value="UniProtKB-UniRule"/>
</dbReference>
<dbReference type="GO" id="GO:0046084">
    <property type="term" value="P:adenine biosynthetic process"/>
    <property type="evidence" value="ECO:0007669"/>
    <property type="project" value="TreeGrafter"/>
</dbReference>
<dbReference type="CDD" id="cd02196">
    <property type="entry name" value="PurM"/>
    <property type="match status" value="1"/>
</dbReference>
<dbReference type="FunFam" id="3.30.1330.10:FF:000001">
    <property type="entry name" value="Phosphoribosylformylglycinamidine cyclo-ligase"/>
    <property type="match status" value="1"/>
</dbReference>
<dbReference type="FunFam" id="3.90.650.10:FF:000001">
    <property type="entry name" value="Phosphoribosylformylglycinamidine cyclo-ligase"/>
    <property type="match status" value="1"/>
</dbReference>
<dbReference type="Gene3D" id="3.90.650.10">
    <property type="entry name" value="PurM-like C-terminal domain"/>
    <property type="match status" value="1"/>
</dbReference>
<dbReference type="Gene3D" id="3.30.1330.10">
    <property type="entry name" value="PurM-like, N-terminal domain"/>
    <property type="match status" value="1"/>
</dbReference>
<dbReference type="HAMAP" id="MF_00741">
    <property type="entry name" value="AIRS"/>
    <property type="match status" value="1"/>
</dbReference>
<dbReference type="InterPro" id="IPR010918">
    <property type="entry name" value="PurM-like_C_dom"/>
</dbReference>
<dbReference type="InterPro" id="IPR036676">
    <property type="entry name" value="PurM-like_C_sf"/>
</dbReference>
<dbReference type="InterPro" id="IPR016188">
    <property type="entry name" value="PurM-like_N"/>
</dbReference>
<dbReference type="InterPro" id="IPR036921">
    <property type="entry name" value="PurM-like_N_sf"/>
</dbReference>
<dbReference type="InterPro" id="IPR004733">
    <property type="entry name" value="PurM_cligase"/>
</dbReference>
<dbReference type="NCBIfam" id="TIGR00878">
    <property type="entry name" value="purM"/>
    <property type="match status" value="1"/>
</dbReference>
<dbReference type="PANTHER" id="PTHR10520:SF12">
    <property type="entry name" value="TRIFUNCTIONAL PURINE BIOSYNTHETIC PROTEIN ADENOSINE-3"/>
    <property type="match status" value="1"/>
</dbReference>
<dbReference type="PANTHER" id="PTHR10520">
    <property type="entry name" value="TRIFUNCTIONAL PURINE BIOSYNTHETIC PROTEIN ADENOSINE-3-RELATED"/>
    <property type="match status" value="1"/>
</dbReference>
<dbReference type="Pfam" id="PF00586">
    <property type="entry name" value="AIRS"/>
    <property type="match status" value="1"/>
</dbReference>
<dbReference type="Pfam" id="PF02769">
    <property type="entry name" value="AIRS_C"/>
    <property type="match status" value="1"/>
</dbReference>
<dbReference type="SUPFAM" id="SSF56042">
    <property type="entry name" value="PurM C-terminal domain-like"/>
    <property type="match status" value="1"/>
</dbReference>
<dbReference type="SUPFAM" id="SSF55326">
    <property type="entry name" value="PurM N-terminal domain-like"/>
    <property type="match status" value="1"/>
</dbReference>
<accession>B1HTV6</accession>
<proteinExistence type="inferred from homology"/>
<gene>
    <name evidence="1" type="primary">purM</name>
    <name type="ordered locus">Bsph_0216</name>
</gene>
<feature type="chain" id="PRO_1000193031" description="Phosphoribosylformylglycinamidine cyclo-ligase">
    <location>
        <begin position="1"/>
        <end position="351"/>
    </location>
</feature>
<organism>
    <name type="scientific">Lysinibacillus sphaericus (strain C3-41)</name>
    <dbReference type="NCBI Taxonomy" id="444177"/>
    <lineage>
        <taxon>Bacteria</taxon>
        <taxon>Bacillati</taxon>
        <taxon>Bacillota</taxon>
        <taxon>Bacilli</taxon>
        <taxon>Bacillales</taxon>
        <taxon>Bacillaceae</taxon>
        <taxon>Lysinibacillus</taxon>
    </lineage>
</organism>
<keyword id="KW-0067">ATP-binding</keyword>
<keyword id="KW-0963">Cytoplasm</keyword>
<keyword id="KW-0436">Ligase</keyword>
<keyword id="KW-0547">Nucleotide-binding</keyword>
<keyword id="KW-0658">Purine biosynthesis</keyword>
<sequence>MSKAYEQAGVNIEAGYEAVKRMKSHVERTNRLGVMGTFGGFGGMFDLSELNLKEPVLISGTDGVGTKLKLAFMVDKHDTIGVDCVAMCVNDIVAQGAEPLYFLDYVALGKAEPAKIEQIVKGVADGCVQSGAALIGGETAEMPGLYEEDEYDLAGFAVGACEKSAIVTGERIVEGDVLIGIASSGVHSNGYSLVRKIVFADRQYAVDAIVENYEDLGPIGEALLVPTKLYAKPVLAALKAADVHGCAHVTGGGFYENLPRMMPEGLATEIDLGSWPVLRIFEFLKDKGQLEDKDLYNVFNMGIGFVIAAPAAEADKVMAAVEANGEKAYTIGRVIKGNGVVFNGTHDGSLV</sequence>
<reference key="1">
    <citation type="journal article" date="2008" name="J. Bacteriol.">
        <title>Complete genome sequence of the mosquitocidal bacterium Bacillus sphaericus C3-41 and comparison with those of closely related Bacillus species.</title>
        <authorList>
            <person name="Hu X."/>
            <person name="Fan W."/>
            <person name="Han B."/>
            <person name="Liu H."/>
            <person name="Zheng D."/>
            <person name="Li Q."/>
            <person name="Dong W."/>
            <person name="Yan J."/>
            <person name="Gao M."/>
            <person name="Berry C."/>
            <person name="Yuan Z."/>
        </authorList>
    </citation>
    <scope>NUCLEOTIDE SEQUENCE [LARGE SCALE GENOMIC DNA]</scope>
    <source>
        <strain>C3-41</strain>
    </source>
</reference>
<protein>
    <recommendedName>
        <fullName evidence="1">Phosphoribosylformylglycinamidine cyclo-ligase</fullName>
        <ecNumber evidence="1">6.3.3.1</ecNumber>
    </recommendedName>
    <alternativeName>
        <fullName evidence="1">AIR synthase</fullName>
    </alternativeName>
    <alternativeName>
        <fullName evidence="1">AIRS</fullName>
    </alternativeName>
    <alternativeName>
        <fullName evidence="1">Phosphoribosyl-aminoimidazole synthetase</fullName>
    </alternativeName>
</protein>
<comment type="catalytic activity">
    <reaction evidence="1">
        <text>2-formamido-N(1)-(5-O-phospho-beta-D-ribosyl)acetamidine + ATP = 5-amino-1-(5-phospho-beta-D-ribosyl)imidazole + ADP + phosphate + H(+)</text>
        <dbReference type="Rhea" id="RHEA:23032"/>
        <dbReference type="ChEBI" id="CHEBI:15378"/>
        <dbReference type="ChEBI" id="CHEBI:30616"/>
        <dbReference type="ChEBI" id="CHEBI:43474"/>
        <dbReference type="ChEBI" id="CHEBI:137981"/>
        <dbReference type="ChEBI" id="CHEBI:147287"/>
        <dbReference type="ChEBI" id="CHEBI:456216"/>
        <dbReference type="EC" id="6.3.3.1"/>
    </reaction>
</comment>
<comment type="pathway">
    <text evidence="1">Purine metabolism; IMP biosynthesis via de novo pathway; 5-amino-1-(5-phospho-D-ribosyl)imidazole from N(2)-formyl-N(1)-(5-phospho-D-ribosyl)glycinamide: step 2/2.</text>
</comment>
<comment type="subcellular location">
    <subcellularLocation>
        <location evidence="1">Cytoplasm</location>
    </subcellularLocation>
</comment>
<comment type="similarity">
    <text evidence="1">Belongs to the AIR synthase family.</text>
</comment>